<dbReference type="EC" id="3.1.3.-" evidence="3"/>
<dbReference type="EMBL" id="Z83337">
    <property type="protein sequence ID" value="CAB05952.1"/>
    <property type="molecule type" value="Genomic_DNA"/>
</dbReference>
<dbReference type="EMBL" id="AL009126">
    <property type="protein sequence ID" value="CAB15646.1"/>
    <property type="molecule type" value="Genomic_DNA"/>
</dbReference>
<dbReference type="PIR" id="C70066">
    <property type="entry name" value="C70066"/>
</dbReference>
<dbReference type="RefSeq" id="NP_391510.1">
    <property type="nucleotide sequence ID" value="NC_000964.3"/>
</dbReference>
<dbReference type="RefSeq" id="WP_003242946.1">
    <property type="nucleotide sequence ID" value="NZ_OZ025638.1"/>
</dbReference>
<dbReference type="PDB" id="1NRW">
    <property type="method" value="X-ray"/>
    <property type="resolution" value="1.70 A"/>
    <property type="chains" value="A=1-285"/>
</dbReference>
<dbReference type="PDBsum" id="1NRW"/>
<dbReference type="SMR" id="P94592"/>
<dbReference type="FunCoup" id="P94592">
    <property type="interactions" value="29"/>
</dbReference>
<dbReference type="STRING" id="224308.BSU36290"/>
<dbReference type="PaxDb" id="224308-BSU36290"/>
<dbReference type="EnsemblBacteria" id="CAB15646">
    <property type="protein sequence ID" value="CAB15646"/>
    <property type="gene ID" value="BSU_36290"/>
</dbReference>
<dbReference type="GeneID" id="936907"/>
<dbReference type="KEGG" id="bsu:BSU36290"/>
<dbReference type="PATRIC" id="fig|224308.179.peg.3928"/>
<dbReference type="eggNOG" id="COG0561">
    <property type="taxonomic scope" value="Bacteria"/>
</dbReference>
<dbReference type="InParanoid" id="P94592"/>
<dbReference type="OrthoDB" id="9806027at2"/>
<dbReference type="PhylomeDB" id="P94592"/>
<dbReference type="BioCyc" id="BSUB:BSU36290-MONOMER"/>
<dbReference type="EvolutionaryTrace" id="P94592"/>
<dbReference type="Proteomes" id="UP000001570">
    <property type="component" value="Chromosome"/>
</dbReference>
<dbReference type="GO" id="GO:0005829">
    <property type="term" value="C:cytosol"/>
    <property type="evidence" value="ECO:0000318"/>
    <property type="project" value="GO_Central"/>
</dbReference>
<dbReference type="GO" id="GO:0000287">
    <property type="term" value="F:magnesium ion binding"/>
    <property type="evidence" value="ECO:0000318"/>
    <property type="project" value="GO_Central"/>
</dbReference>
<dbReference type="GO" id="GO:0016791">
    <property type="term" value="F:phosphatase activity"/>
    <property type="evidence" value="ECO:0000318"/>
    <property type="project" value="GO_Central"/>
</dbReference>
<dbReference type="CDD" id="cd07516">
    <property type="entry name" value="HAD_Pase"/>
    <property type="match status" value="1"/>
</dbReference>
<dbReference type="Gene3D" id="3.30.1240.10">
    <property type="match status" value="1"/>
</dbReference>
<dbReference type="Gene3D" id="3.40.50.1000">
    <property type="entry name" value="HAD superfamily/HAD-like"/>
    <property type="match status" value="1"/>
</dbReference>
<dbReference type="InterPro" id="IPR000150">
    <property type="entry name" value="Cof"/>
</dbReference>
<dbReference type="InterPro" id="IPR036412">
    <property type="entry name" value="HAD-like_sf"/>
</dbReference>
<dbReference type="InterPro" id="IPR006379">
    <property type="entry name" value="HAD-SF_hydro_IIB"/>
</dbReference>
<dbReference type="InterPro" id="IPR023214">
    <property type="entry name" value="HAD_sf"/>
</dbReference>
<dbReference type="NCBIfam" id="TIGR00099">
    <property type="entry name" value="Cof-subfamily"/>
    <property type="match status" value="1"/>
</dbReference>
<dbReference type="NCBIfam" id="TIGR01484">
    <property type="entry name" value="HAD-SF-IIB"/>
    <property type="match status" value="1"/>
</dbReference>
<dbReference type="PANTHER" id="PTHR10000:SF55">
    <property type="entry name" value="5-AMINO-6-(5-PHOSPHO-D-RIBITYLAMINO)URACIL PHOSPHATASE YCSE"/>
    <property type="match status" value="1"/>
</dbReference>
<dbReference type="PANTHER" id="PTHR10000">
    <property type="entry name" value="PHOSPHOSERINE PHOSPHATASE"/>
    <property type="match status" value="1"/>
</dbReference>
<dbReference type="Pfam" id="PF08282">
    <property type="entry name" value="Hydrolase_3"/>
    <property type="match status" value="1"/>
</dbReference>
<dbReference type="SFLD" id="SFLDG01144">
    <property type="entry name" value="C2.B.4:_PGP_Like"/>
    <property type="match status" value="1"/>
</dbReference>
<dbReference type="SFLD" id="SFLDG01140">
    <property type="entry name" value="C2.B:_Phosphomannomutase_and_P"/>
    <property type="match status" value="1"/>
</dbReference>
<dbReference type="SUPFAM" id="SSF56784">
    <property type="entry name" value="HAD-like"/>
    <property type="match status" value="1"/>
</dbReference>
<dbReference type="PROSITE" id="PS01228">
    <property type="entry name" value="COF_1"/>
    <property type="match status" value="1"/>
</dbReference>
<dbReference type="PROSITE" id="PS01229">
    <property type="entry name" value="COF_2"/>
    <property type="match status" value="1"/>
</dbReference>
<accession>P94592</accession>
<accession>Q795B2</accession>
<keyword id="KW-0002">3D-structure</keyword>
<keyword id="KW-0378">Hydrolase</keyword>
<keyword id="KW-0460">Magnesium</keyword>
<keyword id="KW-0479">Metal-binding</keyword>
<keyword id="KW-1185">Reference proteome</keyword>
<evidence type="ECO:0000250" key="1"/>
<evidence type="ECO:0000250" key="2">
    <source>
        <dbReference type="UniProtKB" id="P96741"/>
    </source>
</evidence>
<evidence type="ECO:0000269" key="3">
    <source>
    </source>
</evidence>
<evidence type="ECO:0000269" key="4">
    <source ref="4"/>
</evidence>
<evidence type="ECO:0000305" key="5"/>
<evidence type="ECO:0000305" key="6">
    <source>
    </source>
</evidence>
<evidence type="ECO:0007829" key="7">
    <source>
        <dbReference type="PDB" id="1NRW"/>
    </source>
</evidence>
<protein>
    <recommendedName>
        <fullName evidence="6">Phosphatase YwpJ</fullName>
        <ecNumber evidence="3">3.1.3.-</ecNumber>
    </recommendedName>
</protein>
<proteinExistence type="evidence at protein level"/>
<organism>
    <name type="scientific">Bacillus subtilis (strain 168)</name>
    <dbReference type="NCBI Taxonomy" id="224308"/>
    <lineage>
        <taxon>Bacteria</taxon>
        <taxon>Bacillati</taxon>
        <taxon>Bacillota</taxon>
        <taxon>Bacilli</taxon>
        <taxon>Bacillales</taxon>
        <taxon>Bacillaceae</taxon>
        <taxon>Bacillus</taxon>
    </lineage>
</organism>
<comment type="function">
    <text evidence="2 3">Catalyzes the dephosphorylation of phosphorylated 5-6 carbon sugars and monophosphate nucleotides (NMP) in vitro (By similarity). To a lesser extent, dephosphorylates flavin mononucleotide (FMN) in vitro (PubMed:26316208).</text>
</comment>
<comment type="cofactor">
    <cofactor evidence="3">
        <name>Mg(2+)</name>
        <dbReference type="ChEBI" id="CHEBI:18420"/>
    </cofactor>
</comment>
<comment type="biophysicochemical properties">
    <kinetics>
        <Vmax evidence="3">0.009 umol/min/mg enzyme with flavin mononucleotide</Vmax>
    </kinetics>
</comment>
<comment type="similarity">
    <text evidence="5">Belongs to the HAD-like hydrolase superfamily. Cof family.</text>
</comment>
<feature type="chain" id="PRO_0000360521" description="Phosphatase YwpJ">
    <location>
        <begin position="1"/>
        <end position="285"/>
    </location>
</feature>
<feature type="active site" description="Nucleophile" evidence="1">
    <location>
        <position position="7"/>
    </location>
</feature>
<feature type="binding site" evidence="5">
    <location>
        <position position="7"/>
    </location>
    <ligand>
        <name>Mg(2+)</name>
        <dbReference type="ChEBI" id="CHEBI:18420"/>
    </ligand>
</feature>
<feature type="binding site" evidence="1">
    <location>
        <position position="8"/>
    </location>
    <ligand>
        <name>phosphate</name>
        <dbReference type="ChEBI" id="CHEBI:43474"/>
    </ligand>
</feature>
<feature type="binding site" evidence="5">
    <location>
        <position position="9"/>
    </location>
    <ligand>
        <name>Mg(2+)</name>
        <dbReference type="ChEBI" id="CHEBI:18420"/>
    </ligand>
</feature>
<feature type="binding site">
    <location>
        <begin position="41"/>
        <end position="42"/>
    </location>
    <ligand>
        <name>phosphate</name>
        <dbReference type="ChEBI" id="CHEBI:43474"/>
    </ligand>
</feature>
<feature type="binding site" evidence="4">
    <location>
        <position position="214"/>
    </location>
    <ligand>
        <name>phosphate</name>
        <dbReference type="ChEBI" id="CHEBI:43474"/>
    </ligand>
</feature>
<feature type="binding site" evidence="5">
    <location>
        <position position="237"/>
    </location>
    <ligand>
        <name>Mg(2+)</name>
        <dbReference type="ChEBI" id="CHEBI:18420"/>
    </ligand>
</feature>
<feature type="binding site" evidence="5">
    <location>
        <position position="238"/>
    </location>
    <ligand>
        <name>Mg(2+)</name>
        <dbReference type="ChEBI" id="CHEBI:18420"/>
    </ligand>
</feature>
<feature type="binding site" evidence="4">
    <location>
        <position position="240"/>
    </location>
    <ligand>
        <name>phosphate</name>
        <dbReference type="ChEBI" id="CHEBI:43474"/>
    </ligand>
</feature>
<feature type="binding site">
    <location>
        <begin position="282"/>
        <end position="283"/>
    </location>
    <ligand>
        <name>phosphate</name>
        <dbReference type="ChEBI" id="CHEBI:43474"/>
    </ligand>
</feature>
<feature type="strand" evidence="7">
    <location>
        <begin position="3"/>
        <end position="7"/>
    </location>
</feature>
<feature type="helix" evidence="7">
    <location>
        <begin position="8"/>
        <end position="12"/>
    </location>
</feature>
<feature type="helix" evidence="7">
    <location>
        <begin position="21"/>
        <end position="32"/>
    </location>
</feature>
<feature type="strand" evidence="7">
    <location>
        <begin position="36"/>
        <end position="40"/>
    </location>
</feature>
<feature type="helix" evidence="7">
    <location>
        <begin position="45"/>
        <end position="52"/>
    </location>
</feature>
<feature type="turn" evidence="7">
    <location>
        <begin position="53"/>
        <end position="56"/>
    </location>
</feature>
<feature type="strand" evidence="7">
    <location>
        <begin position="60"/>
        <end position="63"/>
    </location>
</feature>
<feature type="helix" evidence="7">
    <location>
        <begin position="64"/>
        <end position="66"/>
    </location>
</feature>
<feature type="strand" evidence="7">
    <location>
        <begin position="68"/>
        <end position="70"/>
    </location>
</feature>
<feature type="strand" evidence="7">
    <location>
        <begin position="76"/>
        <end position="79"/>
    </location>
</feature>
<feature type="helix" evidence="7">
    <location>
        <begin position="84"/>
        <end position="96"/>
    </location>
</feature>
<feature type="strand" evidence="7">
    <location>
        <begin position="100"/>
        <end position="107"/>
    </location>
</feature>
<feature type="strand" evidence="7">
    <location>
        <begin position="109"/>
        <end position="111"/>
    </location>
</feature>
<feature type="helix" evidence="7">
    <location>
        <begin position="115"/>
        <end position="129"/>
    </location>
</feature>
<feature type="helix" evidence="7">
    <location>
        <begin position="135"/>
        <end position="147"/>
    </location>
</feature>
<feature type="strand" evidence="7">
    <location>
        <begin position="151"/>
        <end position="153"/>
    </location>
</feature>
<feature type="helix" evidence="7">
    <location>
        <begin position="157"/>
        <end position="160"/>
    </location>
</feature>
<feature type="strand" evidence="7">
    <location>
        <begin position="162"/>
        <end position="165"/>
    </location>
</feature>
<feature type="strand" evidence="7">
    <location>
        <begin position="169"/>
        <end position="175"/>
    </location>
</feature>
<feature type="helix" evidence="7">
    <location>
        <begin position="179"/>
        <end position="189"/>
    </location>
</feature>
<feature type="strand" evidence="7">
    <location>
        <begin position="195"/>
        <end position="198"/>
    </location>
</feature>
<feature type="strand" evidence="7">
    <location>
        <begin position="204"/>
        <end position="209"/>
    </location>
</feature>
<feature type="helix" evidence="7">
    <location>
        <begin position="214"/>
        <end position="224"/>
    </location>
</feature>
<feature type="helix" evidence="7">
    <location>
        <begin position="229"/>
        <end position="231"/>
    </location>
</feature>
<feature type="strand" evidence="7">
    <location>
        <begin position="232"/>
        <end position="238"/>
    </location>
</feature>
<feature type="helix" evidence="7">
    <location>
        <begin position="239"/>
        <end position="241"/>
    </location>
</feature>
<feature type="helix" evidence="7">
    <location>
        <begin position="242"/>
        <end position="247"/>
    </location>
</feature>
<feature type="strand" evidence="7">
    <location>
        <begin position="248"/>
        <end position="253"/>
    </location>
</feature>
<feature type="helix" evidence="7">
    <location>
        <begin position="259"/>
        <end position="264"/>
    </location>
</feature>
<feature type="strand" evidence="7">
    <location>
        <begin position="266"/>
        <end position="268"/>
    </location>
</feature>
<feature type="helix" evidence="7">
    <location>
        <begin position="272"/>
        <end position="274"/>
    </location>
</feature>
<feature type="helix" evidence="7">
    <location>
        <begin position="276"/>
        <end position="283"/>
    </location>
</feature>
<gene>
    <name type="primary">ywpJ</name>
    <name type="ordered locus">BSU36290</name>
</gene>
<name>YWPJ_BACSU</name>
<reference key="1">
    <citation type="journal article" date="1997" name="Microbiology">
        <title>The Bacillus subtilis genome from gerBC (311 degrees) to licR (334 degrees).</title>
        <authorList>
            <person name="Presecan E."/>
            <person name="Moszer I."/>
            <person name="Boursier L."/>
            <person name="Cruz Ramos H."/>
            <person name="De La Fuente V."/>
            <person name="Hullo M.-F."/>
            <person name="Lelong C."/>
            <person name="Schleich S."/>
            <person name="Sekowska A."/>
            <person name="Song B.H."/>
            <person name="Villani G."/>
            <person name="Kunst F."/>
            <person name="Danchin A."/>
            <person name="Glaser P."/>
        </authorList>
    </citation>
    <scope>NUCLEOTIDE SEQUENCE [GENOMIC DNA]</scope>
    <source>
        <strain>168</strain>
    </source>
</reference>
<reference key="2">
    <citation type="journal article" date="1997" name="Nature">
        <title>The complete genome sequence of the Gram-positive bacterium Bacillus subtilis.</title>
        <authorList>
            <person name="Kunst F."/>
            <person name="Ogasawara N."/>
            <person name="Moszer I."/>
            <person name="Albertini A.M."/>
            <person name="Alloni G."/>
            <person name="Azevedo V."/>
            <person name="Bertero M.G."/>
            <person name="Bessieres P."/>
            <person name="Bolotin A."/>
            <person name="Borchert S."/>
            <person name="Borriss R."/>
            <person name="Boursier L."/>
            <person name="Brans A."/>
            <person name="Braun M."/>
            <person name="Brignell S.C."/>
            <person name="Bron S."/>
            <person name="Brouillet S."/>
            <person name="Bruschi C.V."/>
            <person name="Caldwell B."/>
            <person name="Capuano V."/>
            <person name="Carter N.M."/>
            <person name="Choi S.-K."/>
            <person name="Codani J.-J."/>
            <person name="Connerton I.F."/>
            <person name="Cummings N.J."/>
            <person name="Daniel R.A."/>
            <person name="Denizot F."/>
            <person name="Devine K.M."/>
            <person name="Duesterhoeft A."/>
            <person name="Ehrlich S.D."/>
            <person name="Emmerson P.T."/>
            <person name="Entian K.-D."/>
            <person name="Errington J."/>
            <person name="Fabret C."/>
            <person name="Ferrari E."/>
            <person name="Foulger D."/>
            <person name="Fritz C."/>
            <person name="Fujita M."/>
            <person name="Fujita Y."/>
            <person name="Fuma S."/>
            <person name="Galizzi A."/>
            <person name="Galleron N."/>
            <person name="Ghim S.-Y."/>
            <person name="Glaser P."/>
            <person name="Goffeau A."/>
            <person name="Golightly E.J."/>
            <person name="Grandi G."/>
            <person name="Guiseppi G."/>
            <person name="Guy B.J."/>
            <person name="Haga K."/>
            <person name="Haiech J."/>
            <person name="Harwood C.R."/>
            <person name="Henaut A."/>
            <person name="Hilbert H."/>
            <person name="Holsappel S."/>
            <person name="Hosono S."/>
            <person name="Hullo M.-F."/>
            <person name="Itaya M."/>
            <person name="Jones L.-M."/>
            <person name="Joris B."/>
            <person name="Karamata D."/>
            <person name="Kasahara Y."/>
            <person name="Klaerr-Blanchard M."/>
            <person name="Klein C."/>
            <person name="Kobayashi Y."/>
            <person name="Koetter P."/>
            <person name="Koningstein G."/>
            <person name="Krogh S."/>
            <person name="Kumano M."/>
            <person name="Kurita K."/>
            <person name="Lapidus A."/>
            <person name="Lardinois S."/>
            <person name="Lauber J."/>
            <person name="Lazarevic V."/>
            <person name="Lee S.-M."/>
            <person name="Levine A."/>
            <person name="Liu H."/>
            <person name="Masuda S."/>
            <person name="Mauel C."/>
            <person name="Medigue C."/>
            <person name="Medina N."/>
            <person name="Mellado R.P."/>
            <person name="Mizuno M."/>
            <person name="Moestl D."/>
            <person name="Nakai S."/>
            <person name="Noback M."/>
            <person name="Noone D."/>
            <person name="O'Reilly M."/>
            <person name="Ogawa K."/>
            <person name="Ogiwara A."/>
            <person name="Oudega B."/>
            <person name="Park S.-H."/>
            <person name="Parro V."/>
            <person name="Pohl T.M."/>
            <person name="Portetelle D."/>
            <person name="Porwollik S."/>
            <person name="Prescott A.M."/>
            <person name="Presecan E."/>
            <person name="Pujic P."/>
            <person name="Purnelle B."/>
            <person name="Rapoport G."/>
            <person name="Rey M."/>
            <person name="Reynolds S."/>
            <person name="Rieger M."/>
            <person name="Rivolta C."/>
            <person name="Rocha E."/>
            <person name="Roche B."/>
            <person name="Rose M."/>
            <person name="Sadaie Y."/>
            <person name="Sato T."/>
            <person name="Scanlan E."/>
            <person name="Schleich S."/>
            <person name="Schroeter R."/>
            <person name="Scoffone F."/>
            <person name="Sekiguchi J."/>
            <person name="Sekowska A."/>
            <person name="Seror S.J."/>
            <person name="Serror P."/>
            <person name="Shin B.-S."/>
            <person name="Soldo B."/>
            <person name="Sorokin A."/>
            <person name="Tacconi E."/>
            <person name="Takagi T."/>
            <person name="Takahashi H."/>
            <person name="Takemaru K."/>
            <person name="Takeuchi M."/>
            <person name="Tamakoshi A."/>
            <person name="Tanaka T."/>
            <person name="Terpstra P."/>
            <person name="Tognoni A."/>
            <person name="Tosato V."/>
            <person name="Uchiyama S."/>
            <person name="Vandenbol M."/>
            <person name="Vannier F."/>
            <person name="Vassarotti A."/>
            <person name="Viari A."/>
            <person name="Wambutt R."/>
            <person name="Wedler E."/>
            <person name="Wedler H."/>
            <person name="Weitzenegger T."/>
            <person name="Winters P."/>
            <person name="Wipat A."/>
            <person name="Yamamoto H."/>
            <person name="Yamane K."/>
            <person name="Yasumoto K."/>
            <person name="Yata K."/>
            <person name="Yoshida K."/>
            <person name="Yoshikawa H.-F."/>
            <person name="Zumstein E."/>
            <person name="Yoshikawa H."/>
            <person name="Danchin A."/>
        </authorList>
    </citation>
    <scope>NUCLEOTIDE SEQUENCE [LARGE SCALE GENOMIC DNA]</scope>
    <source>
        <strain>168</strain>
    </source>
</reference>
<reference key="3">
    <citation type="journal article" date="2015" name="ChemBioChem">
        <title>Catalysis of an essential step in Vitamin B2 biosynthesis by a consortium of broad spectrum hydrolases.</title>
        <authorList>
            <person name="Sarge S."/>
            <person name="Haase I."/>
            <person name="Illarionov B."/>
            <person name="Laudert D."/>
            <person name="Hohmann H.P."/>
            <person name="Bacher A."/>
            <person name="Fischer M."/>
        </authorList>
    </citation>
    <scope>FUNCTION</scope>
    <scope>CATALYTIC ACTIVITY</scope>
    <scope>BIOPHYSICOCHEMICAL PROPERTIES</scope>
    <scope>COFACTOR</scope>
</reference>
<reference key="4">
    <citation type="submission" date="2005-01" db="PDB data bank">
        <title>The structure of a haloacid dehalogenase-like hydrolase from B. subtilis.</title>
        <authorList>
            <consortium name="Midwest center for structural genomics (MCSG)"/>
        </authorList>
    </citation>
    <scope>X-RAY CRYSTALLOGRAPHY (1.7 ANGSTROMS) IN COMPLEX WITH PHOSPHATE AND CALCIUM IONS</scope>
</reference>
<sequence length="285" mass="31955">MKLIAIDLDGTLLNSKHQVSLENENALRQAQRDGIEVVVSTGRAHFDVMSIFEPLGIKTWVISANGAVIHDPEGRLYHHETIDKKRAYDILSWLESENYYYEVFTGSAIYTPQNGRELLDVELDRFRSANPEADLSVLKQAAEVQYSQSGFAYINSFQELFEADEPIDFYNILGFSFFKEKLEAGWKRYEHAEDLTLVSSAEHNFELSSRKASKGQALKRLAKQLNIPLEETAAVGDSLNDKSMLEAAGKGVAMGNAREDIKSIADAVTLTNDEHGVAHMMKHLL</sequence>